<proteinExistence type="inferred from homology"/>
<accession>A1B515</accession>
<reference key="1">
    <citation type="submission" date="2006-12" db="EMBL/GenBank/DDBJ databases">
        <title>Complete sequence of chromosome 1 of Paracoccus denitrificans PD1222.</title>
        <authorList>
            <person name="Copeland A."/>
            <person name="Lucas S."/>
            <person name="Lapidus A."/>
            <person name="Barry K."/>
            <person name="Detter J.C."/>
            <person name="Glavina del Rio T."/>
            <person name="Hammon N."/>
            <person name="Israni S."/>
            <person name="Dalin E."/>
            <person name="Tice H."/>
            <person name="Pitluck S."/>
            <person name="Munk A.C."/>
            <person name="Brettin T."/>
            <person name="Bruce D."/>
            <person name="Han C."/>
            <person name="Tapia R."/>
            <person name="Gilna P."/>
            <person name="Schmutz J."/>
            <person name="Larimer F."/>
            <person name="Land M."/>
            <person name="Hauser L."/>
            <person name="Kyrpides N."/>
            <person name="Lykidis A."/>
            <person name="Spiro S."/>
            <person name="Richardson D.J."/>
            <person name="Moir J.W.B."/>
            <person name="Ferguson S.J."/>
            <person name="van Spanning R.J.M."/>
            <person name="Richardson P."/>
        </authorList>
    </citation>
    <scope>NUCLEOTIDE SEQUENCE [LARGE SCALE GENOMIC DNA]</scope>
    <source>
        <strain>Pd 1222</strain>
    </source>
</reference>
<feature type="chain" id="PRO_1000063802" description="3-isopropylmalate dehydratase small subunit">
    <location>
        <begin position="1"/>
        <end position="201"/>
    </location>
</feature>
<sequence>MDKFTTLTGIAAPMPLVNIDTDMIIPKQFLKTIHRSGLGKNLFDEMRYNPDGSEIPDFVLNQPAYRESQIIVAGDNFGCGSSREHAPWALLDFGIRCVISTSFADIFYNNCFKNGILPIVMPQEVVDVLMEDAKKGANARMTVDLENLTVTTSDGQSFPFELDPFRRHCLLNGLDDIGLTMEKAGAIDTYEAQMAQSRPWV</sequence>
<comment type="function">
    <text evidence="1">Catalyzes the isomerization between 2-isopropylmalate and 3-isopropylmalate, via the formation of 2-isopropylmaleate.</text>
</comment>
<comment type="catalytic activity">
    <reaction evidence="1">
        <text>(2R,3S)-3-isopropylmalate = (2S)-2-isopropylmalate</text>
        <dbReference type="Rhea" id="RHEA:32287"/>
        <dbReference type="ChEBI" id="CHEBI:1178"/>
        <dbReference type="ChEBI" id="CHEBI:35121"/>
        <dbReference type="EC" id="4.2.1.33"/>
    </reaction>
</comment>
<comment type="pathway">
    <text evidence="1">Amino-acid biosynthesis; L-leucine biosynthesis; L-leucine from 3-methyl-2-oxobutanoate: step 2/4.</text>
</comment>
<comment type="subunit">
    <text evidence="1">Heterodimer of LeuC and LeuD.</text>
</comment>
<comment type="similarity">
    <text evidence="1">Belongs to the LeuD family. LeuD type 1 subfamily.</text>
</comment>
<name>LEUD_PARDP</name>
<organism>
    <name type="scientific">Paracoccus denitrificans (strain Pd 1222)</name>
    <dbReference type="NCBI Taxonomy" id="318586"/>
    <lineage>
        <taxon>Bacteria</taxon>
        <taxon>Pseudomonadati</taxon>
        <taxon>Pseudomonadota</taxon>
        <taxon>Alphaproteobacteria</taxon>
        <taxon>Rhodobacterales</taxon>
        <taxon>Paracoccaceae</taxon>
        <taxon>Paracoccus</taxon>
    </lineage>
</organism>
<evidence type="ECO:0000255" key="1">
    <source>
        <dbReference type="HAMAP-Rule" id="MF_01031"/>
    </source>
</evidence>
<gene>
    <name evidence="1" type="primary">leuD</name>
    <name type="ordered locus">Pden_2522</name>
</gene>
<keyword id="KW-0028">Amino-acid biosynthesis</keyword>
<keyword id="KW-0100">Branched-chain amino acid biosynthesis</keyword>
<keyword id="KW-0432">Leucine biosynthesis</keyword>
<keyword id="KW-0456">Lyase</keyword>
<keyword id="KW-1185">Reference proteome</keyword>
<dbReference type="EC" id="4.2.1.33" evidence="1"/>
<dbReference type="EMBL" id="CP000489">
    <property type="protein sequence ID" value="ABL70609.1"/>
    <property type="molecule type" value="Genomic_DNA"/>
</dbReference>
<dbReference type="RefSeq" id="WP_011748802.1">
    <property type="nucleotide sequence ID" value="NC_008686.1"/>
</dbReference>
<dbReference type="SMR" id="A1B515"/>
<dbReference type="STRING" id="318586.Pden_2522"/>
<dbReference type="EnsemblBacteria" id="ABL70609">
    <property type="protein sequence ID" value="ABL70609"/>
    <property type="gene ID" value="Pden_2522"/>
</dbReference>
<dbReference type="GeneID" id="93450915"/>
<dbReference type="KEGG" id="pde:Pden_2522"/>
<dbReference type="eggNOG" id="COG0066">
    <property type="taxonomic scope" value="Bacteria"/>
</dbReference>
<dbReference type="HOGENOM" id="CLU_081378_0_3_5"/>
<dbReference type="OrthoDB" id="9777465at2"/>
<dbReference type="UniPathway" id="UPA00048">
    <property type="reaction ID" value="UER00071"/>
</dbReference>
<dbReference type="Proteomes" id="UP000000361">
    <property type="component" value="Chromosome 1"/>
</dbReference>
<dbReference type="GO" id="GO:0009316">
    <property type="term" value="C:3-isopropylmalate dehydratase complex"/>
    <property type="evidence" value="ECO:0007669"/>
    <property type="project" value="InterPro"/>
</dbReference>
<dbReference type="GO" id="GO:0003861">
    <property type="term" value="F:3-isopropylmalate dehydratase activity"/>
    <property type="evidence" value="ECO:0007669"/>
    <property type="project" value="UniProtKB-UniRule"/>
</dbReference>
<dbReference type="GO" id="GO:0009098">
    <property type="term" value="P:L-leucine biosynthetic process"/>
    <property type="evidence" value="ECO:0007669"/>
    <property type="project" value="UniProtKB-UniRule"/>
</dbReference>
<dbReference type="CDD" id="cd01577">
    <property type="entry name" value="IPMI_Swivel"/>
    <property type="match status" value="1"/>
</dbReference>
<dbReference type="FunFam" id="3.20.19.10:FF:000003">
    <property type="entry name" value="3-isopropylmalate dehydratase small subunit"/>
    <property type="match status" value="1"/>
</dbReference>
<dbReference type="Gene3D" id="3.20.19.10">
    <property type="entry name" value="Aconitase, domain 4"/>
    <property type="match status" value="1"/>
</dbReference>
<dbReference type="HAMAP" id="MF_01031">
    <property type="entry name" value="LeuD_type1"/>
    <property type="match status" value="1"/>
</dbReference>
<dbReference type="InterPro" id="IPR004431">
    <property type="entry name" value="3-IsopropMal_deHydase_ssu"/>
</dbReference>
<dbReference type="InterPro" id="IPR015928">
    <property type="entry name" value="Aconitase/3IPM_dehydase_swvl"/>
</dbReference>
<dbReference type="InterPro" id="IPR000573">
    <property type="entry name" value="AconitaseA/IPMdHydase_ssu_swvl"/>
</dbReference>
<dbReference type="InterPro" id="IPR033940">
    <property type="entry name" value="IPMI_Swivel"/>
</dbReference>
<dbReference type="InterPro" id="IPR050075">
    <property type="entry name" value="LeuD"/>
</dbReference>
<dbReference type="NCBIfam" id="TIGR00171">
    <property type="entry name" value="leuD"/>
    <property type="match status" value="1"/>
</dbReference>
<dbReference type="NCBIfam" id="NF002458">
    <property type="entry name" value="PRK01641.1"/>
    <property type="match status" value="1"/>
</dbReference>
<dbReference type="PANTHER" id="PTHR43345:SF5">
    <property type="entry name" value="3-ISOPROPYLMALATE DEHYDRATASE SMALL SUBUNIT"/>
    <property type="match status" value="1"/>
</dbReference>
<dbReference type="PANTHER" id="PTHR43345">
    <property type="entry name" value="3-ISOPROPYLMALATE DEHYDRATASE SMALL SUBUNIT 2-RELATED-RELATED"/>
    <property type="match status" value="1"/>
</dbReference>
<dbReference type="Pfam" id="PF00694">
    <property type="entry name" value="Aconitase_C"/>
    <property type="match status" value="1"/>
</dbReference>
<dbReference type="SUPFAM" id="SSF52016">
    <property type="entry name" value="LeuD/IlvD-like"/>
    <property type="match status" value="1"/>
</dbReference>
<protein>
    <recommendedName>
        <fullName evidence="1">3-isopropylmalate dehydratase small subunit</fullName>
        <ecNumber evidence="1">4.2.1.33</ecNumber>
    </recommendedName>
    <alternativeName>
        <fullName evidence="1">Alpha-IPM isomerase</fullName>
        <shortName evidence="1">IPMI</shortName>
    </alternativeName>
    <alternativeName>
        <fullName evidence="1">Isopropylmalate isomerase</fullName>
    </alternativeName>
</protein>